<evidence type="ECO:0000250" key="1">
    <source>
        <dbReference type="UniProtKB" id="P75798"/>
    </source>
</evidence>
<evidence type="ECO:0000255" key="2"/>
<evidence type="ECO:0000255" key="3">
    <source>
        <dbReference type="PROSITE-ProRule" id="PRU00441"/>
    </source>
</evidence>
<evidence type="ECO:0000305" key="4"/>
<organism>
    <name type="scientific">Pectobacterium atrosepticum (strain SCRI 1043 / ATCC BAA-672)</name>
    <name type="common">Erwinia carotovora subsp. atroseptica</name>
    <dbReference type="NCBI Taxonomy" id="218491"/>
    <lineage>
        <taxon>Bacteria</taxon>
        <taxon>Pseudomonadati</taxon>
        <taxon>Pseudomonadota</taxon>
        <taxon>Gammaproteobacteria</taxon>
        <taxon>Enterobacterales</taxon>
        <taxon>Pectobacteriaceae</taxon>
        <taxon>Pectobacterium</taxon>
    </lineage>
</organism>
<keyword id="KW-0997">Cell inner membrane</keyword>
<keyword id="KW-1003">Cell membrane</keyword>
<keyword id="KW-0472">Membrane</keyword>
<keyword id="KW-1185">Reference proteome</keyword>
<keyword id="KW-0812">Transmembrane</keyword>
<keyword id="KW-1133">Transmembrane helix</keyword>
<keyword id="KW-0813">Transport</keyword>
<comment type="function">
    <text evidence="1">Part of the ABC transporter complex GsiABCD involved in glutathione import. Probably responsible for the translocation of the substrate across the membrane.</text>
</comment>
<comment type="subunit">
    <text evidence="1">The complex is composed of two ATP-binding proteins (GsiA), two transmembrane proteins (GsiC and GsiD) and a solute-binding protein (GsiB).</text>
</comment>
<comment type="subcellular location">
    <subcellularLocation>
        <location evidence="1">Cell inner membrane</location>
        <topology evidence="2">Multi-pass membrane protein</topology>
    </subcellularLocation>
</comment>
<comment type="similarity">
    <text evidence="4">Belongs to the binding-protein-dependent transport system permease family.</text>
</comment>
<accession>Q6D3B1</accession>
<protein>
    <recommendedName>
        <fullName evidence="1">Glutathione transport system permease protein GsiC</fullName>
    </recommendedName>
</protein>
<feature type="chain" id="PRO_0000279987" description="Glutathione transport system permease protein GsiC">
    <location>
        <begin position="1"/>
        <end position="306"/>
    </location>
</feature>
<feature type="topological domain" description="Cytoplasmic" evidence="2">
    <location>
        <begin position="1"/>
        <end position="8"/>
    </location>
</feature>
<feature type="transmembrane region" description="Helical" evidence="3">
    <location>
        <begin position="9"/>
        <end position="29"/>
    </location>
</feature>
<feature type="topological domain" description="Periplasmic" evidence="2">
    <location>
        <begin position="30"/>
        <end position="98"/>
    </location>
</feature>
<feature type="transmembrane region" description="Helical" evidence="3">
    <location>
        <begin position="99"/>
        <end position="119"/>
    </location>
</feature>
<feature type="topological domain" description="Cytoplasmic" evidence="2">
    <location>
        <begin position="120"/>
        <end position="130"/>
    </location>
</feature>
<feature type="transmembrane region" description="Helical" evidence="3">
    <location>
        <begin position="131"/>
        <end position="151"/>
    </location>
</feature>
<feature type="topological domain" description="Periplasmic" evidence="2">
    <location>
        <begin position="152"/>
        <end position="168"/>
    </location>
</feature>
<feature type="transmembrane region" description="Helical" evidence="3">
    <location>
        <begin position="169"/>
        <end position="189"/>
    </location>
</feature>
<feature type="topological domain" description="Cytoplasmic" evidence="2">
    <location>
        <begin position="190"/>
        <end position="228"/>
    </location>
</feature>
<feature type="transmembrane region" description="Helical" evidence="3">
    <location>
        <begin position="229"/>
        <end position="249"/>
    </location>
</feature>
<feature type="topological domain" description="Periplasmic" evidence="2">
    <location>
        <begin position="250"/>
        <end position="278"/>
    </location>
</feature>
<feature type="transmembrane region" description="Helical" evidence="3">
    <location>
        <begin position="279"/>
        <end position="299"/>
    </location>
</feature>
<feature type="topological domain" description="Cytoplasmic" evidence="2">
    <location>
        <begin position="300"/>
        <end position="306"/>
    </location>
</feature>
<feature type="domain" description="ABC transmembrane type-1" evidence="3">
    <location>
        <begin position="95"/>
        <end position="292"/>
    </location>
</feature>
<name>GSIC_PECAS</name>
<gene>
    <name evidence="1" type="primary">gsiC</name>
    <name type="ordered locus">ECA2833</name>
</gene>
<dbReference type="EMBL" id="BX950851">
    <property type="protein sequence ID" value="CAG75733.1"/>
    <property type="molecule type" value="Genomic_DNA"/>
</dbReference>
<dbReference type="RefSeq" id="WP_011094367.1">
    <property type="nucleotide sequence ID" value="NC_004547.2"/>
</dbReference>
<dbReference type="SMR" id="Q6D3B1"/>
<dbReference type="STRING" id="218491.ECA2833"/>
<dbReference type="GeneID" id="57208478"/>
<dbReference type="KEGG" id="eca:ECA2833"/>
<dbReference type="PATRIC" id="fig|218491.5.peg.2874"/>
<dbReference type="eggNOG" id="COG0601">
    <property type="taxonomic scope" value="Bacteria"/>
</dbReference>
<dbReference type="HOGENOM" id="CLU_036879_0_0_6"/>
<dbReference type="OrthoDB" id="9805855at2"/>
<dbReference type="Proteomes" id="UP000007966">
    <property type="component" value="Chromosome"/>
</dbReference>
<dbReference type="GO" id="GO:0005886">
    <property type="term" value="C:plasma membrane"/>
    <property type="evidence" value="ECO:0007669"/>
    <property type="project" value="UniProtKB-SubCell"/>
</dbReference>
<dbReference type="GO" id="GO:0055085">
    <property type="term" value="P:transmembrane transport"/>
    <property type="evidence" value="ECO:0007669"/>
    <property type="project" value="InterPro"/>
</dbReference>
<dbReference type="CDD" id="cd06261">
    <property type="entry name" value="TM_PBP2"/>
    <property type="match status" value="1"/>
</dbReference>
<dbReference type="FunFam" id="1.10.3720.10:FF:000024">
    <property type="entry name" value="Glutathione ABC transporter permease GsiC"/>
    <property type="match status" value="1"/>
</dbReference>
<dbReference type="Gene3D" id="1.10.3720.10">
    <property type="entry name" value="MetI-like"/>
    <property type="match status" value="1"/>
</dbReference>
<dbReference type="InterPro" id="IPR045621">
    <property type="entry name" value="BPD_transp_1_N"/>
</dbReference>
<dbReference type="InterPro" id="IPR000515">
    <property type="entry name" value="MetI-like"/>
</dbReference>
<dbReference type="InterPro" id="IPR035906">
    <property type="entry name" value="MetI-like_sf"/>
</dbReference>
<dbReference type="NCBIfam" id="NF011661">
    <property type="entry name" value="PRK15081.1"/>
    <property type="match status" value="1"/>
</dbReference>
<dbReference type="PANTHER" id="PTHR43163">
    <property type="entry name" value="DIPEPTIDE TRANSPORT SYSTEM PERMEASE PROTEIN DPPB-RELATED"/>
    <property type="match status" value="1"/>
</dbReference>
<dbReference type="PANTHER" id="PTHR43163:SF5">
    <property type="entry name" value="GLUTATHIONE TRANSPORT SYSTEM PERMEASE PROTEIN GSIC"/>
    <property type="match status" value="1"/>
</dbReference>
<dbReference type="Pfam" id="PF00528">
    <property type="entry name" value="BPD_transp_1"/>
    <property type="match status" value="1"/>
</dbReference>
<dbReference type="Pfam" id="PF19300">
    <property type="entry name" value="BPD_transp_1_N"/>
    <property type="match status" value="1"/>
</dbReference>
<dbReference type="SUPFAM" id="SSF161098">
    <property type="entry name" value="MetI-like"/>
    <property type="match status" value="1"/>
</dbReference>
<dbReference type="PROSITE" id="PS50928">
    <property type="entry name" value="ABC_TM1"/>
    <property type="match status" value="1"/>
</dbReference>
<sequence>MLNYFIKRLLGLIPTLLIVMVLVFLFVHLLPGDPARLAAGREADAAVIEMVRQDLGLDKPLPHQFWHFLTNILQGDLGTSMVSKRPVTQEIALRFMPTFWLTVCSMAWAVIFGMAIGIVSAVWRNGWPDRIGMTLAVSGLSFPAFALGMLLMQIFSVELGWLPTVGADTWLHYILPSLTLGAAVAAVMARFTRASFVDVLQEDYMRTARAKGVRESLVVLKHGLRNALIPVVTMMGLQFGFLLGGSIVVEKVFNWPGLGRLLVDSVEMRDYPVIQAEVLLFSLEFILINLLVDMLYAAINPAIRYK</sequence>
<proteinExistence type="inferred from homology"/>
<reference key="1">
    <citation type="journal article" date="2004" name="Proc. Natl. Acad. Sci. U.S.A.">
        <title>Genome sequence of the enterobacterial phytopathogen Erwinia carotovora subsp. atroseptica and characterization of virulence factors.</title>
        <authorList>
            <person name="Bell K.S."/>
            <person name="Sebaihia M."/>
            <person name="Pritchard L."/>
            <person name="Holden M.T.G."/>
            <person name="Hyman L.J."/>
            <person name="Holeva M.C."/>
            <person name="Thomson N.R."/>
            <person name="Bentley S.D."/>
            <person name="Churcher L.J.C."/>
            <person name="Mungall K."/>
            <person name="Atkin R."/>
            <person name="Bason N."/>
            <person name="Brooks K."/>
            <person name="Chillingworth T."/>
            <person name="Clark K."/>
            <person name="Doggett J."/>
            <person name="Fraser A."/>
            <person name="Hance Z."/>
            <person name="Hauser H."/>
            <person name="Jagels K."/>
            <person name="Moule S."/>
            <person name="Norbertczak H."/>
            <person name="Ormond D."/>
            <person name="Price C."/>
            <person name="Quail M.A."/>
            <person name="Sanders M."/>
            <person name="Walker D."/>
            <person name="Whitehead S."/>
            <person name="Salmond G.P.C."/>
            <person name="Birch P.R.J."/>
            <person name="Parkhill J."/>
            <person name="Toth I.K."/>
        </authorList>
    </citation>
    <scope>NUCLEOTIDE SEQUENCE [LARGE SCALE GENOMIC DNA]</scope>
    <source>
        <strain>SCRI 1043 / ATCC BAA-672</strain>
    </source>
</reference>